<comment type="function">
    <text evidence="1">Subunit of STT3A-containing oligosaccharyl transferase (OST-A) complex that catalyzes the initial transfer of a defined glycan (Glc(3)Man(9)GlcNAc(2) in eukaryotes) from the lipid carrier dolichol-pyrophosphate to an asparagine residue within an Asn-X-Ser/Thr consensus motif in nascent polypeptide chains, the first step in protein N-glycosylation. N-glycosylation occurs cotranslationally and the complex associates with the Sec61 complex at the channel-forming translocon complex that mediates protein translocation across the endoplasmic reticulum (ER). Within the OST-A complex, acts as an adapter that anchors the OST-A complex to the Sec61 complex. May be involved in N-glycosylation of APP (amyloid-beta precursor protein). Can modulate gamma-secretase cleavage of APP by enhancing endoprotelysis of PSEN1.</text>
</comment>
<comment type="pathway">
    <text evidence="1">Protein modification; protein glycosylation.</text>
</comment>
<comment type="subunit">
    <text evidence="1">Component of STT3A-containing oligosaccharyl transferase (OST-A) complex. STT3A-containing complex assembly occurs through the formation of 3 subcomplexes. Subcomplex 1 contains RPN1 and TMEM258, subcomplex 2 contains the STT3A-specific subunits STT3A, DC2/OSTC, and KCP2 as well as the core subunit OST4, and subcomplex 3 contains RPN2, DAD1, and OST48. The OST-A complex can form stable complexes with the Sec61 complex or with both the Sec61 and TRAP complexes. Interacts with PSEN1 and NCSTN; indicative for an association with the gamma-secretase complex.</text>
</comment>
<comment type="subcellular location">
    <subcellularLocation>
        <location evidence="1">Endoplasmic reticulum</location>
    </subcellularLocation>
    <subcellularLocation>
        <location evidence="3">Membrane</location>
        <topology evidence="3">Multi-pass membrane protein</topology>
    </subcellularLocation>
</comment>
<comment type="similarity">
    <text evidence="2">Belongs to the OSTC family.</text>
</comment>
<accession>B0K025</accession>
<name>OSTC_RAT</name>
<sequence>METLYRVPFLVLECPNLKLKKPPWVHMPSAMTVYALVVVSYFLITGGIIYDVIVEPPSVGSMTDEHGHQRPVAFLAYRVNGQYIMEGLASSFLFTMGGLGFIILDRSNAPNIPKLNRFLLLFIGFVCVLLSFFMARVFMRMKLPGYLMG</sequence>
<protein>
    <recommendedName>
        <fullName evidence="3">Oligosaccharyltransferase complex subunit OSTC</fullName>
    </recommendedName>
</protein>
<dbReference type="EMBL" id="CH473952">
    <property type="protein sequence ID" value="EDL82202.1"/>
    <property type="molecule type" value="Genomic_DNA"/>
</dbReference>
<dbReference type="EMBL" id="BC159425">
    <property type="protein sequence ID" value="AAI59426.1"/>
    <property type="molecule type" value="mRNA"/>
</dbReference>
<dbReference type="RefSeq" id="NP_001102036.1">
    <property type="nucleotide sequence ID" value="NM_001108566.1"/>
</dbReference>
<dbReference type="SMR" id="B0K025"/>
<dbReference type="FunCoup" id="B0K025">
    <property type="interactions" value="1524"/>
</dbReference>
<dbReference type="STRING" id="10116.ENSRNOP00000037521"/>
<dbReference type="PhosphoSitePlus" id="B0K025"/>
<dbReference type="jPOST" id="B0K025"/>
<dbReference type="PaxDb" id="10116-ENSRNOP00000037521"/>
<dbReference type="PeptideAtlas" id="B0K025"/>
<dbReference type="Ensembl" id="ENSRNOT00000037393.6">
    <property type="protein sequence ID" value="ENSRNOP00000037521.4"/>
    <property type="gene ID" value="ENSRNOG00000023322.6"/>
</dbReference>
<dbReference type="GeneID" id="362040"/>
<dbReference type="KEGG" id="rno:362040"/>
<dbReference type="AGR" id="RGD:1560708"/>
<dbReference type="CTD" id="58505"/>
<dbReference type="RGD" id="1560708">
    <property type="gene designation" value="Ostc"/>
</dbReference>
<dbReference type="eggNOG" id="KOG3356">
    <property type="taxonomic scope" value="Eukaryota"/>
</dbReference>
<dbReference type="GeneTree" id="ENSGT00390000001376"/>
<dbReference type="HOGENOM" id="CLU_109136_1_0_1"/>
<dbReference type="InParanoid" id="B0K025"/>
<dbReference type="OrthoDB" id="63699at9989"/>
<dbReference type="PhylomeDB" id="B0K025"/>
<dbReference type="TreeFam" id="TF323315"/>
<dbReference type="UniPathway" id="UPA00378"/>
<dbReference type="PRO" id="PR:B0K025"/>
<dbReference type="Proteomes" id="UP000002494">
    <property type="component" value="Chromosome 2"/>
</dbReference>
<dbReference type="Proteomes" id="UP000234681">
    <property type="component" value="Chromosome 2"/>
</dbReference>
<dbReference type="Bgee" id="ENSRNOG00000023322">
    <property type="expression patterns" value="Expressed in pancreas and 20 other cell types or tissues"/>
</dbReference>
<dbReference type="GO" id="GO:0008250">
    <property type="term" value="C:oligosaccharyltransferase complex"/>
    <property type="evidence" value="ECO:0000266"/>
    <property type="project" value="RGD"/>
</dbReference>
<dbReference type="GO" id="GO:0160226">
    <property type="term" value="C:oligosaccharyltransferase complex A"/>
    <property type="evidence" value="ECO:0000266"/>
    <property type="project" value="RGD"/>
</dbReference>
<dbReference type="GO" id="GO:0030674">
    <property type="term" value="F:protein-macromolecule adaptor activity"/>
    <property type="evidence" value="ECO:0000266"/>
    <property type="project" value="RGD"/>
</dbReference>
<dbReference type="GO" id="GO:0043686">
    <property type="term" value="P:co-translational protein modification"/>
    <property type="evidence" value="ECO:0000266"/>
    <property type="project" value="RGD"/>
</dbReference>
<dbReference type="GO" id="GO:0018279">
    <property type="term" value="P:protein N-linked glycosylation via asparagine"/>
    <property type="evidence" value="ECO:0000266"/>
    <property type="project" value="RGD"/>
</dbReference>
<dbReference type="InterPro" id="IPR021149">
    <property type="entry name" value="OligosaccharylTrfase_OST3/OST6"/>
</dbReference>
<dbReference type="InterPro" id="IPR042416">
    <property type="entry name" value="OSTC"/>
</dbReference>
<dbReference type="PANTHER" id="PTHR13160">
    <property type="entry name" value="OLIGOSACCHARYLTRANSFERASE COMPLEX SUBUNIT OSTC"/>
    <property type="match status" value="1"/>
</dbReference>
<dbReference type="PANTHER" id="PTHR13160:SF9">
    <property type="entry name" value="OLIGOSACCHARYLTRANSFERASE COMPLEX SUBUNIT OSTC"/>
    <property type="match status" value="1"/>
</dbReference>
<dbReference type="Pfam" id="PF04756">
    <property type="entry name" value="OST3_OST6"/>
    <property type="match status" value="1"/>
</dbReference>
<gene>
    <name evidence="6" type="primary">Ostc</name>
    <name evidence="4 6" type="synonym">Dc2</name>
</gene>
<reference evidence="5" key="1">
    <citation type="submission" date="2005-07" db="EMBL/GenBank/DDBJ databases">
        <authorList>
            <person name="Mural R.J."/>
            <person name="Adams M.D."/>
            <person name="Myers E.W."/>
            <person name="Smith H.O."/>
            <person name="Venter J.C."/>
        </authorList>
    </citation>
    <scope>NUCLEOTIDE SEQUENCE [LARGE SCALE GENOMIC DNA]</scope>
</reference>
<reference evidence="4" key="2">
    <citation type="journal article" date="2004" name="Genome Res.">
        <title>The status, quality, and expansion of the NIH full-length cDNA project: the Mammalian Gene Collection (MGC).</title>
        <authorList>
            <consortium name="The MGC Project Team"/>
        </authorList>
    </citation>
    <scope>NUCLEOTIDE SEQUENCE [LARGE SCALE MRNA]</scope>
    <source>
        <tissue evidence="4">Lung</tissue>
    </source>
</reference>
<feature type="chain" id="PRO_0000370226" description="Oligosaccharyltransferase complex subunit OSTC">
    <location>
        <begin position="1"/>
        <end position="149"/>
    </location>
</feature>
<feature type="topological domain" description="Cytoplasmic" evidence="2">
    <location>
        <begin position="1"/>
        <end position="32"/>
    </location>
</feature>
<feature type="transmembrane region" description="Helical" evidence="2">
    <location>
        <begin position="33"/>
        <end position="53"/>
    </location>
</feature>
<feature type="topological domain" description="Extracellular" evidence="2">
    <location>
        <begin position="54"/>
        <end position="83"/>
    </location>
</feature>
<feature type="transmembrane region" description="Helical" evidence="2">
    <location>
        <begin position="84"/>
        <end position="104"/>
    </location>
</feature>
<feature type="topological domain" description="Cytoplasmic" evidence="2">
    <location>
        <begin position="105"/>
        <end position="117"/>
    </location>
</feature>
<feature type="transmembrane region" description="Helical" evidence="2">
    <location>
        <begin position="118"/>
        <end position="138"/>
    </location>
</feature>
<feature type="topological domain" description="Extracellular" evidence="2">
    <location>
        <begin position="139"/>
        <end position="149"/>
    </location>
</feature>
<organism>
    <name type="scientific">Rattus norvegicus</name>
    <name type="common">Rat</name>
    <dbReference type="NCBI Taxonomy" id="10116"/>
    <lineage>
        <taxon>Eukaryota</taxon>
        <taxon>Metazoa</taxon>
        <taxon>Chordata</taxon>
        <taxon>Craniata</taxon>
        <taxon>Vertebrata</taxon>
        <taxon>Euteleostomi</taxon>
        <taxon>Mammalia</taxon>
        <taxon>Eutheria</taxon>
        <taxon>Euarchontoglires</taxon>
        <taxon>Glires</taxon>
        <taxon>Rodentia</taxon>
        <taxon>Myomorpha</taxon>
        <taxon>Muroidea</taxon>
        <taxon>Muridae</taxon>
        <taxon>Murinae</taxon>
        <taxon>Rattus</taxon>
    </lineage>
</organism>
<keyword id="KW-0256">Endoplasmic reticulum</keyword>
<keyword id="KW-0472">Membrane</keyword>
<keyword id="KW-1185">Reference proteome</keyword>
<keyword id="KW-0812">Transmembrane</keyword>
<keyword id="KW-1133">Transmembrane helix</keyword>
<proteinExistence type="evidence at transcript level"/>
<evidence type="ECO:0000250" key="1">
    <source>
        <dbReference type="UniProtKB" id="Q9NRP0"/>
    </source>
</evidence>
<evidence type="ECO:0000255" key="2"/>
<evidence type="ECO:0000305" key="3"/>
<evidence type="ECO:0000312" key="4">
    <source>
        <dbReference type="EMBL" id="AAI59426.1"/>
    </source>
</evidence>
<evidence type="ECO:0000312" key="5">
    <source>
        <dbReference type="EMBL" id="EDL82202.1"/>
    </source>
</evidence>
<evidence type="ECO:0000312" key="6">
    <source>
        <dbReference type="RGD" id="1560708"/>
    </source>
</evidence>